<sequence>MAAKIRKGDKVIVLTGRDKGRTGEVFAVRPSEGRALVRGVNMVKRHQKQTPQQEGGIISKESPIHLSNLALLDKDGKPTRVGFKIGKDGTKVRIAKSSGAEIDG</sequence>
<protein>
    <recommendedName>
        <fullName evidence="1">Large ribosomal subunit protein uL24</fullName>
    </recommendedName>
    <alternativeName>
        <fullName evidence="2">50S ribosomal protein L24</fullName>
    </alternativeName>
</protein>
<feature type="chain" id="PRO_1000142018" description="Large ribosomal subunit protein uL24">
    <location>
        <begin position="1"/>
        <end position="104"/>
    </location>
</feature>
<reference key="1">
    <citation type="journal article" date="2008" name="J. Bacteriol.">
        <title>Genome sequence of the chemolithoautotrophic bacterium Oligotropha carboxidovorans OM5T.</title>
        <authorList>
            <person name="Paul D."/>
            <person name="Bridges S."/>
            <person name="Burgess S.C."/>
            <person name="Dandass Y."/>
            <person name="Lawrence M.L."/>
        </authorList>
    </citation>
    <scope>NUCLEOTIDE SEQUENCE [LARGE SCALE GENOMIC DNA]</scope>
    <source>
        <strain>ATCC 49405 / DSM 1227 / KCTC 32145 / OM5</strain>
    </source>
</reference>
<reference key="2">
    <citation type="journal article" date="2011" name="J. Bacteriol.">
        <title>Complete genome sequences of the chemolithoautotrophic Oligotropha carboxidovorans strains OM4 and OM5.</title>
        <authorList>
            <person name="Volland S."/>
            <person name="Rachinger M."/>
            <person name="Strittmatter A."/>
            <person name="Daniel R."/>
            <person name="Gottschalk G."/>
            <person name="Meyer O."/>
        </authorList>
    </citation>
    <scope>NUCLEOTIDE SEQUENCE [LARGE SCALE GENOMIC DNA]</scope>
    <source>
        <strain>ATCC 49405 / DSM 1227 / KCTC 32145 / OM5</strain>
    </source>
</reference>
<name>RL24_AFIC5</name>
<keyword id="KW-1185">Reference proteome</keyword>
<keyword id="KW-0687">Ribonucleoprotein</keyword>
<keyword id="KW-0689">Ribosomal protein</keyword>
<keyword id="KW-0694">RNA-binding</keyword>
<keyword id="KW-0699">rRNA-binding</keyword>
<gene>
    <name evidence="1" type="primary">rplX</name>
    <name type="ordered locus">OCAR_5688</name>
    <name type="ordered locus">OCA5_c23190</name>
</gene>
<comment type="function">
    <text evidence="1">One of two assembly initiator proteins, it binds directly to the 5'-end of the 23S rRNA, where it nucleates assembly of the 50S subunit.</text>
</comment>
<comment type="function">
    <text evidence="1">One of the proteins that surrounds the polypeptide exit tunnel on the outside of the subunit.</text>
</comment>
<comment type="subunit">
    <text evidence="1">Part of the 50S ribosomal subunit.</text>
</comment>
<comment type="similarity">
    <text evidence="1">Belongs to the universal ribosomal protein uL24 family.</text>
</comment>
<proteinExistence type="inferred from homology"/>
<organism>
    <name type="scientific">Afipia carboxidovorans (strain ATCC 49405 / DSM 1227 / KCTC 32145 / OM5)</name>
    <name type="common">Oligotropha carboxidovorans</name>
    <dbReference type="NCBI Taxonomy" id="504832"/>
    <lineage>
        <taxon>Bacteria</taxon>
        <taxon>Pseudomonadati</taxon>
        <taxon>Pseudomonadota</taxon>
        <taxon>Alphaproteobacteria</taxon>
        <taxon>Hyphomicrobiales</taxon>
        <taxon>Nitrobacteraceae</taxon>
        <taxon>Afipia</taxon>
    </lineage>
</organism>
<dbReference type="EMBL" id="CP001196">
    <property type="protein sequence ID" value="ACI92816.1"/>
    <property type="molecule type" value="Genomic_DNA"/>
</dbReference>
<dbReference type="EMBL" id="CP002826">
    <property type="protein sequence ID" value="AEI07019.1"/>
    <property type="molecule type" value="Genomic_DNA"/>
</dbReference>
<dbReference type="RefSeq" id="WP_012562845.1">
    <property type="nucleotide sequence ID" value="NC_015684.1"/>
</dbReference>
<dbReference type="SMR" id="B6JEX6"/>
<dbReference type="STRING" id="504832.OCA5_c23190"/>
<dbReference type="KEGG" id="oca:OCAR_5688"/>
<dbReference type="KEGG" id="ocg:OCA5_c23190"/>
<dbReference type="PATRIC" id="fig|504832.7.peg.2444"/>
<dbReference type="eggNOG" id="COG0198">
    <property type="taxonomic scope" value="Bacteria"/>
</dbReference>
<dbReference type="HOGENOM" id="CLU_093315_2_2_5"/>
<dbReference type="OrthoDB" id="9807419at2"/>
<dbReference type="Proteomes" id="UP000007730">
    <property type="component" value="Chromosome"/>
</dbReference>
<dbReference type="GO" id="GO:1990904">
    <property type="term" value="C:ribonucleoprotein complex"/>
    <property type="evidence" value="ECO:0007669"/>
    <property type="project" value="UniProtKB-KW"/>
</dbReference>
<dbReference type="GO" id="GO:0005840">
    <property type="term" value="C:ribosome"/>
    <property type="evidence" value="ECO:0007669"/>
    <property type="project" value="UniProtKB-KW"/>
</dbReference>
<dbReference type="GO" id="GO:0019843">
    <property type="term" value="F:rRNA binding"/>
    <property type="evidence" value="ECO:0007669"/>
    <property type="project" value="UniProtKB-UniRule"/>
</dbReference>
<dbReference type="GO" id="GO:0003735">
    <property type="term" value="F:structural constituent of ribosome"/>
    <property type="evidence" value="ECO:0007669"/>
    <property type="project" value="InterPro"/>
</dbReference>
<dbReference type="GO" id="GO:0006412">
    <property type="term" value="P:translation"/>
    <property type="evidence" value="ECO:0007669"/>
    <property type="project" value="UniProtKB-UniRule"/>
</dbReference>
<dbReference type="CDD" id="cd06089">
    <property type="entry name" value="KOW_RPL26"/>
    <property type="match status" value="1"/>
</dbReference>
<dbReference type="FunFam" id="2.30.30.30:FF:000004">
    <property type="entry name" value="50S ribosomal protein L24"/>
    <property type="match status" value="1"/>
</dbReference>
<dbReference type="Gene3D" id="2.30.30.30">
    <property type="match status" value="1"/>
</dbReference>
<dbReference type="HAMAP" id="MF_01326_B">
    <property type="entry name" value="Ribosomal_uL24_B"/>
    <property type="match status" value="1"/>
</dbReference>
<dbReference type="InterPro" id="IPR005824">
    <property type="entry name" value="KOW"/>
</dbReference>
<dbReference type="InterPro" id="IPR014722">
    <property type="entry name" value="Rib_uL2_dom2"/>
</dbReference>
<dbReference type="InterPro" id="IPR003256">
    <property type="entry name" value="Ribosomal_uL24"/>
</dbReference>
<dbReference type="InterPro" id="IPR005825">
    <property type="entry name" value="Ribosomal_uL24_CS"/>
</dbReference>
<dbReference type="InterPro" id="IPR041988">
    <property type="entry name" value="Ribosomal_uL24_KOW"/>
</dbReference>
<dbReference type="InterPro" id="IPR008991">
    <property type="entry name" value="Translation_prot_SH3-like_sf"/>
</dbReference>
<dbReference type="NCBIfam" id="TIGR01079">
    <property type="entry name" value="rplX_bact"/>
    <property type="match status" value="1"/>
</dbReference>
<dbReference type="PANTHER" id="PTHR12903">
    <property type="entry name" value="MITOCHONDRIAL RIBOSOMAL PROTEIN L24"/>
    <property type="match status" value="1"/>
</dbReference>
<dbReference type="Pfam" id="PF00467">
    <property type="entry name" value="KOW"/>
    <property type="match status" value="1"/>
</dbReference>
<dbReference type="Pfam" id="PF17136">
    <property type="entry name" value="ribosomal_L24"/>
    <property type="match status" value="1"/>
</dbReference>
<dbReference type="SMART" id="SM00739">
    <property type="entry name" value="KOW"/>
    <property type="match status" value="1"/>
</dbReference>
<dbReference type="SUPFAM" id="SSF50104">
    <property type="entry name" value="Translation proteins SH3-like domain"/>
    <property type="match status" value="1"/>
</dbReference>
<dbReference type="PROSITE" id="PS01108">
    <property type="entry name" value="RIBOSOMAL_L24"/>
    <property type="match status" value="1"/>
</dbReference>
<evidence type="ECO:0000255" key="1">
    <source>
        <dbReference type="HAMAP-Rule" id="MF_01326"/>
    </source>
</evidence>
<evidence type="ECO:0000305" key="2"/>
<accession>B6JEX6</accession>
<accession>F8BZB6</accession>